<organism>
    <name type="scientific">Colletotrichum higginsianum (strain IMI 349063)</name>
    <name type="common">Crucifer anthracnose fungus</name>
    <dbReference type="NCBI Taxonomy" id="759273"/>
    <lineage>
        <taxon>Eukaryota</taxon>
        <taxon>Fungi</taxon>
        <taxon>Dikarya</taxon>
        <taxon>Ascomycota</taxon>
        <taxon>Pezizomycotina</taxon>
        <taxon>Sordariomycetes</taxon>
        <taxon>Hypocreomycetidae</taxon>
        <taxon>Glomerellales</taxon>
        <taxon>Glomerellaceae</taxon>
        <taxon>Colletotrichum</taxon>
        <taxon>Colletotrichum destructivum species complex</taxon>
    </lineage>
</organism>
<comment type="function">
    <text evidence="4 7">FAD-dependent monooxygenase; part of the gene cluster that mediates the biosynthesis of the diterpenoid pyrones higginsianins A and B (PubMed:32286350). The first step of the pathway is the synthesis of the alpha-pyrone moiety by the polyketide synthase dpchA via condensation of one acetyl-CoA starter unit with 3 malonyl-CoA units and 2 methylations (Probable). The alpha-pyrone is then combined with geranylgeranyl pyrophosphate (GGPP) formed by the GGPP synthase dpchD through the action of the prenyltransferase dpchC to yield a linear alpha-pyrone diterpenoid (Probable). Subsequent steps in the diterpenoid pyrone biosynthetic pathway involve the decalin core formation, which is initiated by the epoxidation of the C10-C11 olefin by the FAD-dependent oxidoreductase dpchE, and is followed by a cyclization cascade catalyzed by the terpene cyclase dpchB (Probable). The short chain dehydrogenase/reductase dpchG then oxidizes the 8S hydroxy group to a ketone and the short chain dehydrogenase/reductase dpchH reduces the ketone to the 8R hydroxy group to yield higginsianin B (PubMed:32286350). Finally, the FAD-dependent oxidoreductase dpchF converts higginsianin B into higginsianin A (PubMed:32286350).</text>
</comment>
<comment type="cofactor">
    <cofactor evidence="6">
        <name>FAD</name>
        <dbReference type="ChEBI" id="CHEBI:57692"/>
    </cofactor>
</comment>
<comment type="pathway">
    <text evidence="7">Secondary metabolite biosynthesis; terpenoid biosynthesis.</text>
</comment>
<comment type="subcellular location">
    <subcellularLocation>
        <location evidence="2">Membrane</location>
        <topology evidence="2">Single-pass membrane protein</topology>
    </subcellularLocation>
</comment>
<comment type="biotechnology">
    <text evidence="4">Diterpenoid pyrones display various biological activities and higginsianin A shows anti-HIV activity.</text>
</comment>
<comment type="similarity">
    <text evidence="6">Belongs to the paxM FAD-dependent monooxygenase family.</text>
</comment>
<protein>
    <recommendedName>
        <fullName evidence="5">FAD-dependent monooxygenase dpchE</fullName>
        <ecNumber evidence="7">1.-.-.-</ecNumber>
    </recommendedName>
    <alternativeName>
        <fullName evidence="5">Diterpenoid pyrone biosynthesis cluster protein E</fullName>
    </alternativeName>
</protein>
<proteinExistence type="evidence at protein level"/>
<keyword id="KW-0274">FAD</keyword>
<keyword id="KW-0285">Flavoprotein</keyword>
<keyword id="KW-0325">Glycoprotein</keyword>
<keyword id="KW-0472">Membrane</keyword>
<keyword id="KW-0503">Monooxygenase</keyword>
<keyword id="KW-0560">Oxidoreductase</keyword>
<keyword id="KW-1185">Reference proteome</keyword>
<keyword id="KW-0732">Signal</keyword>
<keyword id="KW-0812">Transmembrane</keyword>
<keyword id="KW-1133">Transmembrane helix</keyword>
<sequence>MSEPHFKVIIVGGSITGLTLAHSLHKIGVDFTILEKRATVTPQEGASVGILPNGARVLDQLGLYGLVEEATAPLGATHIHFPDGFHFCSLYPKSMLDNFGYPVAFLERRRLLEVLYNALPDKSKVLVNKTVSDIEQCEDGKSAGVKVRTADGDVYEGDIVVGADGVHSRTRSELWRMSSSAGQSEDVRMEKARMSAEYSCVFGISRGPSGLKAGEQIMRMYDGRTLVVIPSKDDVVFWFLSRKLGKKYKYSEAPRFTLEDAAAECAELADAPLGNDVRFGDVWKIRQTFNMVVLEENLLRTWSFGRVLCIGDSIHKMTVNLGQGANCAIEDVAILTNLLSQCLGSKREAKPSGQELDALLRRFNDVHLSRVSHIYDTSWLIARVHARDGFVRKIIGRYVMPYFGHKFESRPFNMIANAAALEFLPLPRSSFPGWEKYKSKEDKSGSWAVVSRSVLLLVGLAILSTWWRRA</sequence>
<feature type="signal peptide" evidence="2">
    <location>
        <begin position="1"/>
        <end position="24"/>
    </location>
</feature>
<feature type="chain" id="PRO_0000451543" description="FAD-dependent monooxygenase dpchE">
    <location>
        <begin position="25"/>
        <end position="470"/>
    </location>
</feature>
<feature type="transmembrane region" description="Helical" evidence="2">
    <location>
        <begin position="447"/>
        <end position="463"/>
    </location>
</feature>
<feature type="active site" evidence="1">
    <location>
        <position position="193"/>
    </location>
</feature>
<feature type="binding site" evidence="1">
    <location>
        <position position="35"/>
    </location>
    <ligand>
        <name>FAD</name>
        <dbReference type="ChEBI" id="CHEBI:57692"/>
    </ligand>
</feature>
<feature type="binding site" evidence="1">
    <location>
        <position position="49"/>
    </location>
    <ligand>
        <name>FAD</name>
        <dbReference type="ChEBI" id="CHEBI:57692"/>
    </ligand>
</feature>
<feature type="binding site" evidence="1">
    <location>
        <position position="108"/>
    </location>
    <ligand>
        <name>FAD</name>
        <dbReference type="ChEBI" id="CHEBI:57692"/>
    </ligand>
</feature>
<feature type="binding site" evidence="1">
    <location>
        <position position="312"/>
    </location>
    <ligand>
        <name>FAD</name>
        <dbReference type="ChEBI" id="CHEBI:57692"/>
    </ligand>
</feature>
<feature type="binding site" evidence="1">
    <location>
        <position position="325"/>
    </location>
    <ligand>
        <name>FAD</name>
        <dbReference type="ChEBI" id="CHEBI:57692"/>
    </ligand>
</feature>
<feature type="glycosylation site" description="N-linked (GlcNAc...) asparagine" evidence="3">
    <location>
        <position position="128"/>
    </location>
</feature>
<dbReference type="EC" id="1.-.-.-" evidence="7"/>
<dbReference type="EMBL" id="CM004458">
    <property type="protein sequence ID" value="OBR09783.1"/>
    <property type="molecule type" value="Genomic_DNA"/>
</dbReference>
<dbReference type="EMBL" id="CACQ02004606">
    <property type="status" value="NOT_ANNOTATED_CDS"/>
    <property type="molecule type" value="Genomic_DNA"/>
</dbReference>
<dbReference type="RefSeq" id="XP_018158300.1">
    <property type="nucleotide sequence ID" value="XM_018300450.1"/>
</dbReference>
<dbReference type="SMR" id="H1VM35"/>
<dbReference type="STRING" id="759273.H1VM35"/>
<dbReference type="GlyCosmos" id="H1VM35">
    <property type="glycosylation" value="1 site, No reported glycans"/>
</dbReference>
<dbReference type="EnsemblFungi" id="CCF41288">
    <property type="protein sequence ID" value="CCF41288"/>
    <property type="gene ID" value="CH063_11613"/>
</dbReference>
<dbReference type="GeneID" id="28864557"/>
<dbReference type="KEGG" id="chig:CH63R_05475"/>
<dbReference type="VEuPathDB" id="FungiDB:CH63R_05475"/>
<dbReference type="eggNOG" id="KOG2614">
    <property type="taxonomic scope" value="Eukaryota"/>
</dbReference>
<dbReference type="HOGENOM" id="CLU_009665_12_2_1"/>
<dbReference type="OrthoDB" id="49498at1028384"/>
<dbReference type="UniPathway" id="UPA00213"/>
<dbReference type="Proteomes" id="UP000007174">
    <property type="component" value="Unassembled WGS sequence"/>
</dbReference>
<dbReference type="Proteomes" id="UP000092177">
    <property type="component" value="Chromosome 4"/>
</dbReference>
<dbReference type="GO" id="GO:0016020">
    <property type="term" value="C:membrane"/>
    <property type="evidence" value="ECO:0007669"/>
    <property type="project" value="UniProtKB-SubCell"/>
</dbReference>
<dbReference type="GO" id="GO:0071949">
    <property type="term" value="F:FAD binding"/>
    <property type="evidence" value="ECO:0007669"/>
    <property type="project" value="InterPro"/>
</dbReference>
<dbReference type="GO" id="GO:0004497">
    <property type="term" value="F:monooxygenase activity"/>
    <property type="evidence" value="ECO:0007669"/>
    <property type="project" value="UniProtKB-KW"/>
</dbReference>
<dbReference type="GO" id="GO:0016114">
    <property type="term" value="P:terpenoid biosynthetic process"/>
    <property type="evidence" value="ECO:0007669"/>
    <property type="project" value="UniProtKB-UniPathway"/>
</dbReference>
<dbReference type="Gene3D" id="3.50.50.60">
    <property type="entry name" value="FAD/NAD(P)-binding domain"/>
    <property type="match status" value="1"/>
</dbReference>
<dbReference type="InterPro" id="IPR002938">
    <property type="entry name" value="FAD-bd"/>
</dbReference>
<dbReference type="InterPro" id="IPR036188">
    <property type="entry name" value="FAD/NAD-bd_sf"/>
</dbReference>
<dbReference type="InterPro" id="IPR050562">
    <property type="entry name" value="FAD_mOase_fung"/>
</dbReference>
<dbReference type="PANTHER" id="PTHR47356:SF2">
    <property type="entry name" value="FAD-BINDING DOMAIN-CONTAINING PROTEIN-RELATED"/>
    <property type="match status" value="1"/>
</dbReference>
<dbReference type="PANTHER" id="PTHR47356">
    <property type="entry name" value="FAD-DEPENDENT MONOOXYGENASE ASQG-RELATED"/>
    <property type="match status" value="1"/>
</dbReference>
<dbReference type="Pfam" id="PF01494">
    <property type="entry name" value="FAD_binding_3"/>
    <property type="match status" value="1"/>
</dbReference>
<dbReference type="PRINTS" id="PR00420">
    <property type="entry name" value="RNGMNOXGNASE"/>
</dbReference>
<dbReference type="SUPFAM" id="SSF51905">
    <property type="entry name" value="FAD/NAD(P)-binding domain"/>
    <property type="match status" value="1"/>
</dbReference>
<name>DPCHE_COLHI</name>
<gene>
    <name evidence="5" type="primary">dpchE</name>
    <name type="ORF">CH063_11613</name>
    <name type="ORF">CH63R_05475</name>
</gene>
<reference key="1">
    <citation type="journal article" date="2012" name="Nat. Genet.">
        <title>Lifestyle transitions in plant pathogenic Colletotrichum fungi deciphered by genome and transcriptome analyses.</title>
        <authorList>
            <person name="O'Connell R.J."/>
            <person name="Thon M.R."/>
            <person name="Hacquard S."/>
            <person name="Amyotte S.G."/>
            <person name="Kleemann J."/>
            <person name="Torres M.F."/>
            <person name="Damm U."/>
            <person name="Buiate E.A."/>
            <person name="Epstein L."/>
            <person name="Alkan N."/>
            <person name="Altmueller J."/>
            <person name="Alvarado-Balderrama L."/>
            <person name="Bauser C.A."/>
            <person name="Becker C."/>
            <person name="Birren B.W."/>
            <person name="Chen Z."/>
            <person name="Choi J."/>
            <person name="Crouch J.A."/>
            <person name="Duvick J.P."/>
            <person name="Farman M.A."/>
            <person name="Gan P."/>
            <person name="Heiman D."/>
            <person name="Henrissat B."/>
            <person name="Howard R.J."/>
            <person name="Kabbage M."/>
            <person name="Koch C."/>
            <person name="Kracher B."/>
            <person name="Kubo Y."/>
            <person name="Law A.D."/>
            <person name="Lebrun M.-H."/>
            <person name="Lee Y.-H."/>
            <person name="Miyara I."/>
            <person name="Moore N."/>
            <person name="Neumann U."/>
            <person name="Nordstroem K."/>
            <person name="Panaccione D.G."/>
            <person name="Panstruga R."/>
            <person name="Place M."/>
            <person name="Proctor R.H."/>
            <person name="Prusky D."/>
            <person name="Rech G."/>
            <person name="Reinhardt R."/>
            <person name="Rollins J.A."/>
            <person name="Rounsley S."/>
            <person name="Schardl C.L."/>
            <person name="Schwartz D.C."/>
            <person name="Shenoy N."/>
            <person name="Shirasu K."/>
            <person name="Sikhakolli U.R."/>
            <person name="Stueber K."/>
            <person name="Sukno S.A."/>
            <person name="Sweigard J.A."/>
            <person name="Takano Y."/>
            <person name="Takahara H."/>
            <person name="Trail F."/>
            <person name="van der Does H.C."/>
            <person name="Voll L.M."/>
            <person name="Will I."/>
            <person name="Young S."/>
            <person name="Zeng Q."/>
            <person name="Zhang J."/>
            <person name="Zhou S."/>
            <person name="Dickman M.B."/>
            <person name="Schulze-Lefert P."/>
            <person name="Ver Loren van Themaat E."/>
            <person name="Ma L.-J."/>
            <person name="Vaillancourt L.J."/>
        </authorList>
    </citation>
    <scope>NUCLEOTIDE SEQUENCE [LARGE SCALE GENOMIC DNA]</scope>
    <source>
        <strain>IMI 349063</strain>
    </source>
</reference>
<reference key="2">
    <citation type="journal article" date="2017" name="BMC Genomics">
        <title>Gapless genome assembly of Colletotrichum higginsianum reveals chromosome structure and association of transposable elements with secondary metabolite gene clusters.</title>
        <authorList>
            <person name="Dallery J.-F."/>
            <person name="Lapalu N."/>
            <person name="Zampounis A."/>
            <person name="Pigne S."/>
            <person name="Luyten I."/>
            <person name="Amselem J."/>
            <person name="Wittenberg A.H.J."/>
            <person name="Zhou S."/>
            <person name="de Queiroz M.V."/>
            <person name="Robin G.P."/>
            <person name="Auger A."/>
            <person name="Hainaut M."/>
            <person name="Henrissat B."/>
            <person name="Kim K.-T."/>
            <person name="Lee Y.-H."/>
            <person name="Lespinet O."/>
            <person name="Schwartz D.C."/>
            <person name="Thon M.R."/>
            <person name="O'Connell R.J."/>
        </authorList>
    </citation>
    <scope>NUCLEOTIDE SEQUENCE [LARGE SCALE GENOMIC DNA]</scope>
    <scope>GENOME REANNOTATION</scope>
    <source>
        <strain>IMI 349063</strain>
    </source>
</reference>
<reference key="3">
    <citation type="journal article" date="2020" name="Nat. Commun.">
        <title>Synthetic biology based construction of biological activity-related library of fungal decalin-containing diterpenoid pyrones.</title>
        <authorList>
            <person name="Tsukada K."/>
            <person name="Shinki S."/>
            <person name="Kaneko A."/>
            <person name="Murakami K."/>
            <person name="Irie K."/>
            <person name="Murai M."/>
            <person name="Miyoshi H."/>
            <person name="Dan S."/>
            <person name="Kawaji K."/>
            <person name="Hayashi H."/>
            <person name="Kodama E.N."/>
            <person name="Hori A."/>
            <person name="Salim E."/>
            <person name="Kuraishi T."/>
            <person name="Hirata N."/>
            <person name="Kanda Y."/>
            <person name="Asai T."/>
        </authorList>
    </citation>
    <scope>FUNCTION</scope>
    <scope>PATHWAY</scope>
    <scope>BIOTECHNOLOGY</scope>
</reference>
<accession>H1VM35</accession>
<evidence type="ECO:0000250" key="1">
    <source>
        <dbReference type="UniProtKB" id="B8M9J8"/>
    </source>
</evidence>
<evidence type="ECO:0000255" key="2"/>
<evidence type="ECO:0000255" key="3">
    <source>
        <dbReference type="PROSITE-ProRule" id="PRU00498"/>
    </source>
</evidence>
<evidence type="ECO:0000269" key="4">
    <source>
    </source>
</evidence>
<evidence type="ECO:0000303" key="5">
    <source>
    </source>
</evidence>
<evidence type="ECO:0000305" key="6"/>
<evidence type="ECO:0000305" key="7">
    <source>
    </source>
</evidence>